<organism>
    <name type="scientific">Streptococcus pyogenes serotype M18 (strain MGAS8232)</name>
    <dbReference type="NCBI Taxonomy" id="186103"/>
    <lineage>
        <taxon>Bacteria</taxon>
        <taxon>Bacillati</taxon>
        <taxon>Bacillota</taxon>
        <taxon>Bacilli</taxon>
        <taxon>Lactobacillales</taxon>
        <taxon>Streptococcaceae</taxon>
        <taxon>Streptococcus</taxon>
    </lineage>
</organism>
<protein>
    <recommendedName>
        <fullName>Tagatose 1,6-diphosphate aldolase 1</fullName>
        <ecNumber>4.1.2.40</ecNumber>
    </recommendedName>
    <alternativeName>
        <fullName>D-tagatose-1,6-bisphosphate aldolase 1</fullName>
    </alternativeName>
    <alternativeName>
        <fullName>Tagatose-bisphosphate aldolase 1</fullName>
    </alternativeName>
</protein>
<feature type="chain" id="PRO_0000203964" description="Tagatose 1,6-diphosphate aldolase 1">
    <location>
        <begin position="1"/>
        <end position="325"/>
    </location>
</feature>
<proteinExistence type="inferred from homology"/>
<evidence type="ECO:0000305" key="1"/>
<keyword id="KW-0423">Lactose metabolism</keyword>
<keyword id="KW-0456">Lyase</keyword>
<name>LACD1_STRP8</name>
<reference key="1">
    <citation type="journal article" date="2002" name="Proc. Natl. Acad. Sci. U.S.A.">
        <title>Genome sequence and comparative microarray analysis of serotype M18 group A Streptococcus strains associated with acute rheumatic fever outbreaks.</title>
        <authorList>
            <person name="Smoot J.C."/>
            <person name="Barbian K.D."/>
            <person name="Van Gompel J.J."/>
            <person name="Smoot L.M."/>
            <person name="Chaussee M.S."/>
            <person name="Sylva G.L."/>
            <person name="Sturdevant D.E."/>
            <person name="Ricklefs S.M."/>
            <person name="Porcella S.F."/>
            <person name="Parkins L.D."/>
            <person name="Beres S.B."/>
            <person name="Campbell D.S."/>
            <person name="Smith T.M."/>
            <person name="Zhang Q."/>
            <person name="Kapur V."/>
            <person name="Daly J.A."/>
            <person name="Veasy L.G."/>
            <person name="Musser J.M."/>
        </authorList>
    </citation>
    <scope>NUCLEOTIDE SEQUENCE [LARGE SCALE GENOMIC DNA]</scope>
    <source>
        <strain>MGAS8232</strain>
    </source>
</reference>
<gene>
    <name type="primary">lacD1</name>
    <name type="synonym">lacD.1</name>
    <name type="ordered locus">spyM18_1714</name>
</gene>
<sequence length="325" mass="36011">MTITANKRHYLEKVSHQGIISALAFDQRGALKQMMAAHQEGEATVTQIETLKVLVSEELTPYASSILLDPEYGLLATKVRANQTGLLLAYEKTGYDATTTSRLPDCLVEWSVKRLKAAGADAIKFLLYYDVDGDEQINLQKQAYIERIGSECTAEDIPFFLELLSYDERISDNNSAAYAKLKPHKVNGAMSVFSDKRFGVDVLKVEVPVNMAYVEGFTEGEVHYSQAEAIKAFQDQEAASHLPYIYLSAGVSAKLFQETLYFAAAAGAQFSGVLCGRATWAGSVPVYITKGEDEARKWLCTEGFQNIDELNRVLEETASPWTEKI</sequence>
<accession>P63704</accession>
<accession>Q99YH3</accession>
<comment type="catalytic activity">
    <reaction>
        <text>D-tagatofuranose 1,6-bisphosphate = D-glyceraldehyde 3-phosphate + dihydroxyacetone phosphate</text>
        <dbReference type="Rhea" id="RHEA:22948"/>
        <dbReference type="ChEBI" id="CHEBI:57642"/>
        <dbReference type="ChEBI" id="CHEBI:58694"/>
        <dbReference type="ChEBI" id="CHEBI:59776"/>
        <dbReference type="EC" id="4.1.2.40"/>
    </reaction>
</comment>
<comment type="pathway">
    <text>Carbohydrate metabolism; D-tagatose 6-phosphate degradation; D-glyceraldehyde 3-phosphate and glycerone phosphate from D-tagatose 6-phosphate: step 2/2.</text>
</comment>
<comment type="similarity">
    <text evidence="1">Belongs to the aldolase LacD family.</text>
</comment>
<dbReference type="EC" id="4.1.2.40"/>
<dbReference type="EMBL" id="AE009949">
    <property type="protein sequence ID" value="AAL98245.1"/>
    <property type="molecule type" value="Genomic_DNA"/>
</dbReference>
<dbReference type="SMR" id="P63704"/>
<dbReference type="KEGG" id="spm:spyM18_1714"/>
<dbReference type="HOGENOM" id="CLU_058971_0_1_9"/>
<dbReference type="UniPathway" id="UPA00704">
    <property type="reaction ID" value="UER00716"/>
</dbReference>
<dbReference type="GO" id="GO:0061595">
    <property type="term" value="F:6-deoxy-6-sulfofructose-1-phosphate aldolase activity"/>
    <property type="evidence" value="ECO:0007669"/>
    <property type="project" value="TreeGrafter"/>
</dbReference>
<dbReference type="GO" id="GO:0009024">
    <property type="term" value="F:tagatose-6-phosphate kinase activity"/>
    <property type="evidence" value="ECO:0007669"/>
    <property type="project" value="InterPro"/>
</dbReference>
<dbReference type="GO" id="GO:0009025">
    <property type="term" value="F:tagatose-bisphosphate aldolase activity"/>
    <property type="evidence" value="ECO:0007669"/>
    <property type="project" value="UniProtKB-UniRule"/>
</dbReference>
<dbReference type="GO" id="GO:1902777">
    <property type="term" value="P:6-sulfoquinovose(1-) catabolic process"/>
    <property type="evidence" value="ECO:0007669"/>
    <property type="project" value="TreeGrafter"/>
</dbReference>
<dbReference type="GO" id="GO:2001059">
    <property type="term" value="P:D-tagatose 6-phosphate catabolic process"/>
    <property type="evidence" value="ECO:0007669"/>
    <property type="project" value="UniProtKB-UniRule"/>
</dbReference>
<dbReference type="GO" id="GO:0019512">
    <property type="term" value="P:lactose catabolic process via tagatose-6-phosphate"/>
    <property type="evidence" value="ECO:0007669"/>
    <property type="project" value="InterPro"/>
</dbReference>
<dbReference type="FunFam" id="3.20.20.70:FF:000137">
    <property type="entry name" value="Tagatose 1,6-diphosphate aldolase 2"/>
    <property type="match status" value="1"/>
</dbReference>
<dbReference type="Gene3D" id="3.20.20.70">
    <property type="entry name" value="Aldolase class I"/>
    <property type="match status" value="1"/>
</dbReference>
<dbReference type="HAMAP" id="MF_00734">
    <property type="entry name" value="LacD"/>
    <property type="match status" value="1"/>
</dbReference>
<dbReference type="InterPro" id="IPR013785">
    <property type="entry name" value="Aldolase_TIM"/>
</dbReference>
<dbReference type="InterPro" id="IPR002915">
    <property type="entry name" value="DeoC/FbaB/LacD_aldolase"/>
</dbReference>
<dbReference type="InterPro" id="IPR050552">
    <property type="entry name" value="LacD_aldolase"/>
</dbReference>
<dbReference type="InterPro" id="IPR005927">
    <property type="entry name" value="Tag_1.6-dipho_adolase"/>
</dbReference>
<dbReference type="NCBIfam" id="TIGR01232">
    <property type="entry name" value="lacD"/>
    <property type="match status" value="1"/>
</dbReference>
<dbReference type="NCBIfam" id="NF003180">
    <property type="entry name" value="PRK04161.1"/>
    <property type="match status" value="1"/>
</dbReference>
<dbReference type="NCBIfam" id="NF009065">
    <property type="entry name" value="PRK12399.1"/>
    <property type="match status" value="1"/>
</dbReference>
<dbReference type="NCBIfam" id="NF009498">
    <property type="entry name" value="PRK12858.1"/>
    <property type="match status" value="1"/>
</dbReference>
<dbReference type="PANTHER" id="PTHR39340">
    <property type="entry name" value="SULFOFRUCTOSEPHOSPHATE ALDOLASE"/>
    <property type="match status" value="1"/>
</dbReference>
<dbReference type="PANTHER" id="PTHR39340:SF1">
    <property type="entry name" value="SULFOFRUCTOSEPHOSPHATE ALDOLASE"/>
    <property type="match status" value="1"/>
</dbReference>
<dbReference type="Pfam" id="PF01791">
    <property type="entry name" value="DeoC"/>
    <property type="match status" value="1"/>
</dbReference>
<dbReference type="SMART" id="SM01133">
    <property type="entry name" value="DeoC"/>
    <property type="match status" value="1"/>
</dbReference>
<dbReference type="SUPFAM" id="SSF51569">
    <property type="entry name" value="Aldolase"/>
    <property type="match status" value="1"/>
</dbReference>